<evidence type="ECO:0000250" key="1">
    <source>
        <dbReference type="UniProtKB" id="P0AE01"/>
    </source>
</evidence>
<evidence type="ECO:0000305" key="2"/>
<sequence length="228" mass="25259">MRITIILVAPARAENIGAAARAMKTMGFSDLRIVDSQAHLEPATRWVAHGSGDIIDNIKVFPTLAESLHDVDFTVATTARSRAKYHYYATPVELVPLLEEKSSWMSHAALVFGREDSGLTNEELALADVLTGVPMVADYPSLNLGQAVMVYCYQLATLIQQPAKSDATADQHQLQALRERAMTLLTTLAVADDIKLVDWLQQRLGLLEQRDTAMLHRLLHDIEKNITK</sequence>
<gene>
    <name type="primary">lasT</name>
    <name type="synonym">yjtD</name>
    <name type="ordered locus">b4403</name>
    <name type="ordered locus">JW4366</name>
</gene>
<reference key="1">
    <citation type="journal article" date="1995" name="Nucleic Acids Res.">
        <title>Analysis of the Escherichia coli genome VI: DNA sequence of the region from 92.8 through 100 minutes.</title>
        <authorList>
            <person name="Burland V.D."/>
            <person name="Plunkett G. III"/>
            <person name="Sofia H.J."/>
            <person name="Daniels D.L."/>
            <person name="Blattner F.R."/>
        </authorList>
    </citation>
    <scope>NUCLEOTIDE SEQUENCE [LARGE SCALE GENOMIC DNA]</scope>
    <source>
        <strain>K12 / MG1655 / ATCC 47076</strain>
    </source>
</reference>
<reference key="2">
    <citation type="journal article" date="1997" name="Science">
        <title>The complete genome sequence of Escherichia coli K-12.</title>
        <authorList>
            <person name="Blattner F.R."/>
            <person name="Plunkett G. III"/>
            <person name="Bloch C.A."/>
            <person name="Perna N.T."/>
            <person name="Burland V."/>
            <person name="Riley M."/>
            <person name="Collado-Vides J."/>
            <person name="Glasner J.D."/>
            <person name="Rode C.K."/>
            <person name="Mayhew G.F."/>
            <person name="Gregor J."/>
            <person name="Davis N.W."/>
            <person name="Kirkpatrick H.A."/>
            <person name="Goeden M.A."/>
            <person name="Rose D.J."/>
            <person name="Mau B."/>
            <person name="Shao Y."/>
        </authorList>
    </citation>
    <scope>NUCLEOTIDE SEQUENCE [LARGE SCALE GENOMIC DNA]</scope>
    <source>
        <strain>K12 / MG1655 / ATCC 47076</strain>
    </source>
</reference>
<reference key="3">
    <citation type="journal article" date="2006" name="Mol. Syst. Biol.">
        <title>Highly accurate genome sequences of Escherichia coli K-12 strains MG1655 and W3110.</title>
        <authorList>
            <person name="Hayashi K."/>
            <person name="Morooka N."/>
            <person name="Yamamoto Y."/>
            <person name="Fujita K."/>
            <person name="Isono K."/>
            <person name="Choi S."/>
            <person name="Ohtsubo E."/>
            <person name="Baba T."/>
            <person name="Wanner B.L."/>
            <person name="Mori H."/>
            <person name="Horiuchi T."/>
        </authorList>
    </citation>
    <scope>NUCLEOTIDE SEQUENCE [LARGE SCALE GENOMIC DNA]</scope>
    <source>
        <strain>K12 / W3110 / ATCC 27325 / DSM 5911</strain>
    </source>
</reference>
<reference key="4">
    <citation type="journal article" date="1994" name="Mol. Microbiol.">
        <title>Anaerobic activation of arcA transcription in Escherichia coli: roles of Fnr and ArcA.</title>
        <authorList>
            <person name="Compan I."/>
            <person name="Touati D."/>
        </authorList>
    </citation>
    <scope>NUCLEOTIDE SEQUENCE [GENOMIC DNA] OF 1-175</scope>
    <source>
        <strain>K12</strain>
    </source>
</reference>
<reference key="5">
    <citation type="unpublished observations" date="1994-03">
        <authorList>
            <person name="Rudd K.E."/>
        </authorList>
    </citation>
    <scope>IDENTIFICATION</scope>
</reference>
<accession>P37005</accession>
<accession>Q2M5R4</accession>
<name>LAST_ECOLI</name>
<dbReference type="EC" id="2.1.1.-"/>
<dbReference type="EMBL" id="U14003">
    <property type="protein sequence ID" value="AAA97299.1"/>
    <property type="molecule type" value="Genomic_DNA"/>
</dbReference>
<dbReference type="EMBL" id="U00096">
    <property type="protein sequence ID" value="AAC77356.1"/>
    <property type="molecule type" value="Genomic_DNA"/>
</dbReference>
<dbReference type="EMBL" id="AP009048">
    <property type="protein sequence ID" value="BAE78392.1"/>
    <property type="molecule type" value="Genomic_DNA"/>
</dbReference>
<dbReference type="EMBL" id="L20873">
    <property type="status" value="NOT_ANNOTATED_CDS"/>
    <property type="molecule type" value="Genomic_DNA"/>
</dbReference>
<dbReference type="PIR" id="S56627">
    <property type="entry name" value="S56627"/>
</dbReference>
<dbReference type="RefSeq" id="NP_418820.1">
    <property type="nucleotide sequence ID" value="NC_000913.3"/>
</dbReference>
<dbReference type="RefSeq" id="WP_001223132.1">
    <property type="nucleotide sequence ID" value="NZ_LN832404.1"/>
</dbReference>
<dbReference type="SMR" id="P37005"/>
<dbReference type="BioGRID" id="4262790">
    <property type="interactions" value="29"/>
</dbReference>
<dbReference type="DIP" id="DIP-10084N"/>
<dbReference type="FunCoup" id="P37005">
    <property type="interactions" value="63"/>
</dbReference>
<dbReference type="IntAct" id="P37005">
    <property type="interactions" value="9"/>
</dbReference>
<dbReference type="STRING" id="511145.b4403"/>
<dbReference type="jPOST" id="P37005"/>
<dbReference type="PaxDb" id="511145-b4403"/>
<dbReference type="EnsemblBacteria" id="AAC77356">
    <property type="protein sequence ID" value="AAC77356"/>
    <property type="gene ID" value="b4403"/>
</dbReference>
<dbReference type="GeneID" id="948924"/>
<dbReference type="KEGG" id="ecj:JW4366"/>
<dbReference type="KEGG" id="eco:b4403"/>
<dbReference type="KEGG" id="ecoc:C3026_23790"/>
<dbReference type="PATRIC" id="fig|1411691.4.peg.2282"/>
<dbReference type="EchoBASE" id="EB2215"/>
<dbReference type="eggNOG" id="COG0565">
    <property type="taxonomic scope" value="Bacteria"/>
</dbReference>
<dbReference type="HOGENOM" id="CLU_056931_3_1_6"/>
<dbReference type="InParanoid" id="P37005"/>
<dbReference type="OMA" id="VYCYQLS"/>
<dbReference type="OrthoDB" id="9806346at2"/>
<dbReference type="PhylomeDB" id="P37005"/>
<dbReference type="BioCyc" id="EcoCyc:EG12309-MONOMER"/>
<dbReference type="PRO" id="PR:P37005"/>
<dbReference type="Proteomes" id="UP000000625">
    <property type="component" value="Chromosome"/>
</dbReference>
<dbReference type="GO" id="GO:0005829">
    <property type="term" value="C:cytosol"/>
    <property type="evidence" value="ECO:0000314"/>
    <property type="project" value="EcoCyc"/>
</dbReference>
<dbReference type="GO" id="GO:0042803">
    <property type="term" value="F:protein homodimerization activity"/>
    <property type="evidence" value="ECO:0000314"/>
    <property type="project" value="EcoCyc"/>
</dbReference>
<dbReference type="GO" id="GO:0003723">
    <property type="term" value="F:RNA binding"/>
    <property type="evidence" value="ECO:0007669"/>
    <property type="project" value="InterPro"/>
</dbReference>
<dbReference type="GO" id="GO:0008173">
    <property type="term" value="F:RNA methyltransferase activity"/>
    <property type="evidence" value="ECO:0007669"/>
    <property type="project" value="InterPro"/>
</dbReference>
<dbReference type="GO" id="GO:0002128">
    <property type="term" value="P:tRNA nucleoside ribose methylation"/>
    <property type="evidence" value="ECO:0000318"/>
    <property type="project" value="GO_Central"/>
</dbReference>
<dbReference type="CDD" id="cd18093">
    <property type="entry name" value="SpoU-like_TrmJ"/>
    <property type="match status" value="1"/>
</dbReference>
<dbReference type="FunFam" id="3.40.1280.10:FF:000014">
    <property type="entry name" value="Predicted protein"/>
    <property type="match status" value="1"/>
</dbReference>
<dbReference type="Gene3D" id="3.40.1280.10">
    <property type="match status" value="1"/>
</dbReference>
<dbReference type="InterPro" id="IPR029028">
    <property type="entry name" value="Alpha/beta_knot_MTases"/>
</dbReference>
<dbReference type="InterPro" id="IPR004384">
    <property type="entry name" value="RNA_MeTrfase_TrmJ/LasT"/>
</dbReference>
<dbReference type="InterPro" id="IPR001537">
    <property type="entry name" value="SpoU_MeTrfase"/>
</dbReference>
<dbReference type="InterPro" id="IPR029026">
    <property type="entry name" value="tRNA_m1G_MTases_N"/>
</dbReference>
<dbReference type="NCBIfam" id="NF007752">
    <property type="entry name" value="PRK10433.1"/>
    <property type="match status" value="1"/>
</dbReference>
<dbReference type="NCBIfam" id="TIGR00050">
    <property type="entry name" value="rRNA_methyl_1"/>
    <property type="match status" value="1"/>
</dbReference>
<dbReference type="PANTHER" id="PTHR42786:SF1">
    <property type="entry name" value="TRNA (CYTIDINE_URIDINE-2'-O-)-METHYLTRANSFERASE TRMJ"/>
    <property type="match status" value="1"/>
</dbReference>
<dbReference type="PANTHER" id="PTHR42786">
    <property type="entry name" value="TRNA/RRNA METHYLTRANSFERASE"/>
    <property type="match status" value="1"/>
</dbReference>
<dbReference type="Pfam" id="PF00588">
    <property type="entry name" value="SpoU_methylase"/>
    <property type="match status" value="1"/>
</dbReference>
<dbReference type="PIRSF" id="PIRSF004808">
    <property type="entry name" value="LasT"/>
    <property type="match status" value="1"/>
</dbReference>
<dbReference type="SUPFAM" id="SSF75217">
    <property type="entry name" value="alpha/beta knot"/>
    <property type="match status" value="1"/>
</dbReference>
<comment type="similarity">
    <text evidence="2">Belongs to the class IV-like SAM-binding methyltransferase superfamily. RNA methyltransferase TrmH family.</text>
</comment>
<proteinExistence type="inferred from homology"/>
<protein>
    <recommendedName>
        <fullName evidence="2">Uncharacterized tRNA/rRNA methyltransferase LasT</fullName>
        <ecNumber>2.1.1.-</ecNumber>
    </recommendedName>
</protein>
<keyword id="KW-0489">Methyltransferase</keyword>
<keyword id="KW-1185">Reference proteome</keyword>
<keyword id="KW-0949">S-adenosyl-L-methionine</keyword>
<keyword id="KW-0808">Transferase</keyword>
<feature type="chain" id="PRO_0000159775" description="Uncharacterized tRNA/rRNA methyltransferase LasT">
    <location>
        <begin position="1"/>
        <end position="228"/>
    </location>
</feature>
<feature type="binding site" evidence="1">
    <location>
        <begin position="77"/>
        <end position="79"/>
    </location>
    <ligand>
        <name>S-adenosyl-L-methionine</name>
        <dbReference type="ChEBI" id="CHEBI:59789"/>
    </ligand>
</feature>
<feature type="binding site" evidence="1">
    <location>
        <position position="113"/>
    </location>
    <ligand>
        <name>S-adenosyl-L-methionine</name>
        <dbReference type="ChEBI" id="CHEBI:59789"/>
    </ligand>
</feature>
<feature type="binding site" evidence="1">
    <location>
        <position position="133"/>
    </location>
    <ligand>
        <name>S-adenosyl-L-methionine</name>
        <dbReference type="ChEBI" id="CHEBI:59789"/>
    </ligand>
</feature>
<feature type="binding site" evidence="1">
    <location>
        <begin position="140"/>
        <end position="142"/>
    </location>
    <ligand>
        <name>S-adenosyl-L-methionine</name>
        <dbReference type="ChEBI" id="CHEBI:59789"/>
    </ligand>
</feature>
<feature type="sequence conflict" description="In Ref. 4; L20873." evidence="2" ref="4">
    <original>L</original>
    <variation>V</variation>
    <location>
        <position position="31"/>
    </location>
</feature>
<organism>
    <name type="scientific">Escherichia coli (strain K12)</name>
    <dbReference type="NCBI Taxonomy" id="83333"/>
    <lineage>
        <taxon>Bacteria</taxon>
        <taxon>Pseudomonadati</taxon>
        <taxon>Pseudomonadota</taxon>
        <taxon>Gammaproteobacteria</taxon>
        <taxon>Enterobacterales</taxon>
        <taxon>Enterobacteriaceae</taxon>
        <taxon>Escherichia</taxon>
    </lineage>
</organism>